<reference key="1">
    <citation type="journal article" date="2009" name="PLoS Biol.">
        <title>Lineage-specific biology revealed by a finished genome assembly of the mouse.</title>
        <authorList>
            <person name="Church D.M."/>
            <person name="Goodstadt L."/>
            <person name="Hillier L.W."/>
            <person name="Zody M.C."/>
            <person name="Goldstein S."/>
            <person name="She X."/>
            <person name="Bult C.J."/>
            <person name="Agarwala R."/>
            <person name="Cherry J.L."/>
            <person name="DiCuccio M."/>
            <person name="Hlavina W."/>
            <person name="Kapustin Y."/>
            <person name="Meric P."/>
            <person name="Maglott D."/>
            <person name="Birtle Z."/>
            <person name="Marques A.C."/>
            <person name="Graves T."/>
            <person name="Zhou S."/>
            <person name="Teague B."/>
            <person name="Potamousis K."/>
            <person name="Churas C."/>
            <person name="Place M."/>
            <person name="Herschleb J."/>
            <person name="Runnheim R."/>
            <person name="Forrest D."/>
            <person name="Amos-Landgraf J."/>
            <person name="Schwartz D.C."/>
            <person name="Cheng Z."/>
            <person name="Lindblad-Toh K."/>
            <person name="Eichler E.E."/>
            <person name="Ponting C.P."/>
        </authorList>
    </citation>
    <scope>NUCLEOTIDE SEQUENCE [LARGE SCALE GENOMIC DNA]</scope>
    <source>
        <strain>C57BL/6J</strain>
    </source>
</reference>
<reference key="2">
    <citation type="journal article" date="2005" name="Science">
        <title>The transcriptional landscape of the mammalian genome.</title>
        <authorList>
            <person name="Carninci P."/>
            <person name="Kasukawa T."/>
            <person name="Katayama S."/>
            <person name="Gough J."/>
            <person name="Frith M.C."/>
            <person name="Maeda N."/>
            <person name="Oyama R."/>
            <person name="Ravasi T."/>
            <person name="Lenhard B."/>
            <person name="Wells C."/>
            <person name="Kodzius R."/>
            <person name="Shimokawa K."/>
            <person name="Bajic V.B."/>
            <person name="Brenner S.E."/>
            <person name="Batalov S."/>
            <person name="Forrest A.R."/>
            <person name="Zavolan M."/>
            <person name="Davis M.J."/>
            <person name="Wilming L.G."/>
            <person name="Aidinis V."/>
            <person name="Allen J.E."/>
            <person name="Ambesi-Impiombato A."/>
            <person name="Apweiler R."/>
            <person name="Aturaliya R.N."/>
            <person name="Bailey T.L."/>
            <person name="Bansal M."/>
            <person name="Baxter L."/>
            <person name="Beisel K.W."/>
            <person name="Bersano T."/>
            <person name="Bono H."/>
            <person name="Chalk A.M."/>
            <person name="Chiu K.P."/>
            <person name="Choudhary V."/>
            <person name="Christoffels A."/>
            <person name="Clutterbuck D.R."/>
            <person name="Crowe M.L."/>
            <person name="Dalla E."/>
            <person name="Dalrymple B.P."/>
            <person name="de Bono B."/>
            <person name="Della Gatta G."/>
            <person name="di Bernardo D."/>
            <person name="Down T."/>
            <person name="Engstrom P."/>
            <person name="Fagiolini M."/>
            <person name="Faulkner G."/>
            <person name="Fletcher C.F."/>
            <person name="Fukushima T."/>
            <person name="Furuno M."/>
            <person name="Futaki S."/>
            <person name="Gariboldi M."/>
            <person name="Georgii-Hemming P."/>
            <person name="Gingeras T.R."/>
            <person name="Gojobori T."/>
            <person name="Green R.E."/>
            <person name="Gustincich S."/>
            <person name="Harbers M."/>
            <person name="Hayashi Y."/>
            <person name="Hensch T.K."/>
            <person name="Hirokawa N."/>
            <person name="Hill D."/>
            <person name="Huminiecki L."/>
            <person name="Iacono M."/>
            <person name="Ikeo K."/>
            <person name="Iwama A."/>
            <person name="Ishikawa T."/>
            <person name="Jakt M."/>
            <person name="Kanapin A."/>
            <person name="Katoh M."/>
            <person name="Kawasawa Y."/>
            <person name="Kelso J."/>
            <person name="Kitamura H."/>
            <person name="Kitano H."/>
            <person name="Kollias G."/>
            <person name="Krishnan S.P."/>
            <person name="Kruger A."/>
            <person name="Kummerfeld S.K."/>
            <person name="Kurochkin I.V."/>
            <person name="Lareau L.F."/>
            <person name="Lazarevic D."/>
            <person name="Lipovich L."/>
            <person name="Liu J."/>
            <person name="Liuni S."/>
            <person name="McWilliam S."/>
            <person name="Madan Babu M."/>
            <person name="Madera M."/>
            <person name="Marchionni L."/>
            <person name="Matsuda H."/>
            <person name="Matsuzawa S."/>
            <person name="Miki H."/>
            <person name="Mignone F."/>
            <person name="Miyake S."/>
            <person name="Morris K."/>
            <person name="Mottagui-Tabar S."/>
            <person name="Mulder N."/>
            <person name="Nakano N."/>
            <person name="Nakauchi H."/>
            <person name="Ng P."/>
            <person name="Nilsson R."/>
            <person name="Nishiguchi S."/>
            <person name="Nishikawa S."/>
            <person name="Nori F."/>
            <person name="Ohara O."/>
            <person name="Okazaki Y."/>
            <person name="Orlando V."/>
            <person name="Pang K.C."/>
            <person name="Pavan W.J."/>
            <person name="Pavesi G."/>
            <person name="Pesole G."/>
            <person name="Petrovsky N."/>
            <person name="Piazza S."/>
            <person name="Reed J."/>
            <person name="Reid J.F."/>
            <person name="Ring B.Z."/>
            <person name="Ringwald M."/>
            <person name="Rost B."/>
            <person name="Ruan Y."/>
            <person name="Salzberg S.L."/>
            <person name="Sandelin A."/>
            <person name="Schneider C."/>
            <person name="Schoenbach C."/>
            <person name="Sekiguchi K."/>
            <person name="Semple C.A."/>
            <person name="Seno S."/>
            <person name="Sessa L."/>
            <person name="Sheng Y."/>
            <person name="Shibata Y."/>
            <person name="Shimada H."/>
            <person name="Shimada K."/>
            <person name="Silva D."/>
            <person name="Sinclair B."/>
            <person name="Sperling S."/>
            <person name="Stupka E."/>
            <person name="Sugiura K."/>
            <person name="Sultana R."/>
            <person name="Takenaka Y."/>
            <person name="Taki K."/>
            <person name="Tammoja K."/>
            <person name="Tan S.L."/>
            <person name="Tang S."/>
            <person name="Taylor M.S."/>
            <person name="Tegner J."/>
            <person name="Teichmann S.A."/>
            <person name="Ueda H.R."/>
            <person name="van Nimwegen E."/>
            <person name="Verardo R."/>
            <person name="Wei C.L."/>
            <person name="Yagi K."/>
            <person name="Yamanishi H."/>
            <person name="Zabarovsky E."/>
            <person name="Zhu S."/>
            <person name="Zimmer A."/>
            <person name="Hide W."/>
            <person name="Bult C."/>
            <person name="Grimmond S.M."/>
            <person name="Teasdale R.D."/>
            <person name="Liu E.T."/>
            <person name="Brusic V."/>
            <person name="Quackenbush J."/>
            <person name="Wahlestedt C."/>
            <person name="Mattick J.S."/>
            <person name="Hume D.A."/>
            <person name="Kai C."/>
            <person name="Sasaki D."/>
            <person name="Tomaru Y."/>
            <person name="Fukuda S."/>
            <person name="Kanamori-Katayama M."/>
            <person name="Suzuki M."/>
            <person name="Aoki J."/>
            <person name="Arakawa T."/>
            <person name="Iida J."/>
            <person name="Imamura K."/>
            <person name="Itoh M."/>
            <person name="Kato T."/>
            <person name="Kawaji H."/>
            <person name="Kawagashira N."/>
            <person name="Kawashima T."/>
            <person name="Kojima M."/>
            <person name="Kondo S."/>
            <person name="Konno H."/>
            <person name="Nakano K."/>
            <person name="Ninomiya N."/>
            <person name="Nishio T."/>
            <person name="Okada M."/>
            <person name="Plessy C."/>
            <person name="Shibata K."/>
            <person name="Shiraki T."/>
            <person name="Suzuki S."/>
            <person name="Tagami M."/>
            <person name="Waki K."/>
            <person name="Watahiki A."/>
            <person name="Okamura-Oho Y."/>
            <person name="Suzuki H."/>
            <person name="Kawai J."/>
            <person name="Hayashizaki Y."/>
        </authorList>
    </citation>
    <scope>NUCLEOTIDE SEQUENCE [LARGE SCALE MRNA] OF 10-220 (ISOFORM 2)</scope>
    <source>
        <strain>C57BL/6J</strain>
        <tissue>Testis</tissue>
    </source>
</reference>
<reference key="3">
    <citation type="journal article" date="2004" name="Genome Res.">
        <title>The status, quality, and expansion of the NIH full-length cDNA project: the Mammalian Gene Collection (MGC).</title>
        <authorList>
            <consortium name="The MGC Project Team"/>
        </authorList>
    </citation>
    <scope>NUCLEOTIDE SEQUENCE [LARGE SCALE MRNA] (ISOFORM 3)</scope>
    <source>
        <tissue>Testis</tissue>
    </source>
</reference>
<reference key="4">
    <citation type="journal article" date="2009" name="Mol. Reprod. Dev.">
        <title>Izumo is part of a multiprotein family whose members form large complexes on mammalian sperm.</title>
        <authorList>
            <person name="Ellerman D.A."/>
            <person name="Pei J."/>
            <person name="Gupta S."/>
            <person name="Snell W.J."/>
            <person name="Myles D."/>
            <person name="Primakoff P."/>
        </authorList>
    </citation>
    <scope>GENE FAMILY</scope>
    <scope>NOMENCLATURE</scope>
</reference>
<protein>
    <recommendedName>
        <fullName>Izumo sperm-egg fusion protein 2</fullName>
    </recommendedName>
</protein>
<gene>
    <name type="primary">Izumo2</name>
</gene>
<name>IZUM2_MOUSE</name>
<proteinExistence type="evidence at transcript level"/>
<feature type="signal peptide" evidence="1">
    <location>
        <begin position="1"/>
        <end position="20"/>
    </location>
</feature>
<feature type="chain" id="PRO_0000373774" description="Izumo sperm-egg fusion protein 2">
    <location>
        <begin position="21"/>
        <end position="220"/>
    </location>
</feature>
<feature type="topological domain" description="Extracellular" evidence="1">
    <location>
        <begin position="21"/>
        <end position="185"/>
    </location>
</feature>
<feature type="transmembrane region" description="Helical" evidence="1">
    <location>
        <begin position="186"/>
        <end position="206"/>
    </location>
</feature>
<feature type="topological domain" description="Cytoplasmic" evidence="1">
    <location>
        <begin position="207"/>
        <end position="220"/>
    </location>
</feature>
<feature type="splice variant" id="VSP_037224" description="In isoform 3." evidence="2">
    <location>
        <begin position="1"/>
        <end position="129"/>
    </location>
</feature>
<feature type="splice variant" id="VSP_037225" description="In isoform 2." evidence="3">
    <original>HSFKAEVLDCLYCKKTMPKCVKKKYCFE</original>
    <variation>Q</variation>
    <location>
        <begin position="139"/>
        <end position="166"/>
    </location>
</feature>
<feature type="splice variant" id="VSP_037226" description="In isoform 3." evidence="2">
    <location>
        <begin position="208"/>
        <end position="212"/>
    </location>
</feature>
<feature type="sequence conflict" description="In Ref. 2; BAB24492." evidence="4" ref="2">
    <original>L</original>
    <variation>R</variation>
    <location>
        <position position="10"/>
    </location>
</feature>
<keyword id="KW-0025">Alternative splicing</keyword>
<keyword id="KW-0472">Membrane</keyword>
<keyword id="KW-1185">Reference proteome</keyword>
<keyword id="KW-0732">Signal</keyword>
<keyword id="KW-0812">Transmembrane</keyword>
<keyword id="KW-1133">Transmembrane helix</keyword>
<sequence length="220" mass="24868">MPLALALVLLCGLGGPGAWGCLQCDQSVLLELRQLRDAIVTKRFHLEGLQARAQALLLSMEGPFFRDYAMNAFVGKVVVDQLEKVATSFKNQAQYIKANSKTDVPLLEELVSFREHAIKELKGALRDYEMKACDHKTCHSFKAEVLDCLYCKKTMPKCVKKKYCFEDGQFRMTLKFQDDNKPRNMVLVGDLVTVGLAILTFLVILIAACTYRQNRKLLLK</sequence>
<accession>Q9DA16</accession>
<accession>Q0P5Z2</accession>
<dbReference type="EMBL" id="AC150895">
    <property type="status" value="NOT_ANNOTATED_CDS"/>
    <property type="molecule type" value="Genomic_DNA"/>
</dbReference>
<dbReference type="EMBL" id="AK006268">
    <property type="protein sequence ID" value="BAB24492.1"/>
    <property type="status" value="ALT_INIT"/>
    <property type="molecule type" value="mRNA"/>
</dbReference>
<dbReference type="EMBL" id="BC048526">
    <property type="protein sequence ID" value="AAH48526.1"/>
    <property type="molecule type" value="mRNA"/>
</dbReference>
<dbReference type="CCDS" id="CCDS52235.1">
    <molecule id="Q9DA16-2"/>
</dbReference>
<dbReference type="RefSeq" id="NP_001355319.1">
    <molecule id="Q9DA16-1"/>
    <property type="nucleotide sequence ID" value="NM_001368390.1"/>
</dbReference>
<dbReference type="RefSeq" id="NP_083593.1">
    <molecule id="Q9DA16-2"/>
    <property type="nucleotide sequence ID" value="NM_029317.2"/>
</dbReference>
<dbReference type="RefSeq" id="XP_006541301.1">
    <property type="nucleotide sequence ID" value="XM_006541238.2"/>
</dbReference>
<dbReference type="SMR" id="Q9DA16"/>
<dbReference type="BioGRID" id="217536">
    <property type="interactions" value="1"/>
</dbReference>
<dbReference type="STRING" id="10090.ENSMUSP00000082543"/>
<dbReference type="PhosphoSitePlus" id="Q9DA16"/>
<dbReference type="SwissPalm" id="Q9DA16"/>
<dbReference type="ProteomicsDB" id="269351">
    <molecule id="Q9DA16-1"/>
</dbReference>
<dbReference type="ProteomicsDB" id="269352">
    <molecule id="Q9DA16-2"/>
</dbReference>
<dbReference type="ProteomicsDB" id="269353">
    <molecule id="Q9DA16-3"/>
</dbReference>
<dbReference type="TopDownProteomics" id="Q9DA16-1">
    <molecule id="Q9DA16-1"/>
</dbReference>
<dbReference type="Antibodypedia" id="49261">
    <property type="antibodies" value="23 antibodies from 11 providers"/>
</dbReference>
<dbReference type="Ensembl" id="ENSMUST00000085422.4">
    <molecule id="Q9DA16-2"/>
    <property type="protein sequence ID" value="ENSMUSP00000082543.3"/>
    <property type="gene ID" value="ENSMUSG00000066500.6"/>
</dbReference>
<dbReference type="GeneID" id="75510"/>
<dbReference type="KEGG" id="mmu:75510"/>
<dbReference type="UCSC" id="uc009gqk.2">
    <molecule id="Q9DA16-2"/>
    <property type="organism name" value="mouse"/>
</dbReference>
<dbReference type="AGR" id="MGI:1922760"/>
<dbReference type="CTD" id="126123"/>
<dbReference type="MGI" id="MGI:1922760">
    <property type="gene designation" value="Izumo2"/>
</dbReference>
<dbReference type="VEuPathDB" id="HostDB:ENSMUSG00000066500"/>
<dbReference type="GeneTree" id="ENSGT00390000015068"/>
<dbReference type="HOGENOM" id="CLU_104457_0_0_1"/>
<dbReference type="InParanoid" id="Q9DA16"/>
<dbReference type="OMA" id="QPRMALQ"/>
<dbReference type="PhylomeDB" id="Q9DA16"/>
<dbReference type="TreeFam" id="TF337020"/>
<dbReference type="Reactome" id="R-MMU-1300645">
    <property type="pathway name" value="Acrosome Reaction and Sperm:Oocyte Membrane Binding"/>
</dbReference>
<dbReference type="BioGRID-ORCS" id="75510">
    <property type="hits" value="1 hit in 76 CRISPR screens"/>
</dbReference>
<dbReference type="PRO" id="PR:Q9DA16"/>
<dbReference type="Proteomes" id="UP000000589">
    <property type="component" value="Chromosome 7"/>
</dbReference>
<dbReference type="RNAct" id="Q9DA16">
    <property type="molecule type" value="protein"/>
</dbReference>
<dbReference type="Bgee" id="ENSMUSG00000066500">
    <property type="expression patterns" value="Expressed in spermatid and 7 other cell types or tissues"/>
</dbReference>
<dbReference type="ExpressionAtlas" id="Q9DA16">
    <property type="expression patterns" value="baseline and differential"/>
</dbReference>
<dbReference type="GO" id="GO:0016020">
    <property type="term" value="C:membrane"/>
    <property type="evidence" value="ECO:0007669"/>
    <property type="project" value="UniProtKB-SubCell"/>
</dbReference>
<dbReference type="InterPro" id="IPR029389">
    <property type="entry name" value="IZUMO"/>
</dbReference>
<dbReference type="InterPro" id="IPR042920">
    <property type="entry name" value="IZUMO2"/>
</dbReference>
<dbReference type="PANTHER" id="PTHR47745">
    <property type="entry name" value="IZUMO SPERM-EGG FUSION PROTEIN 2"/>
    <property type="match status" value="1"/>
</dbReference>
<dbReference type="PANTHER" id="PTHR47745:SF1">
    <property type="entry name" value="IZUMO SPERM-EGG FUSION PROTEIN 2"/>
    <property type="match status" value="1"/>
</dbReference>
<dbReference type="Pfam" id="PF15005">
    <property type="entry name" value="IZUMO"/>
    <property type="match status" value="1"/>
</dbReference>
<organism>
    <name type="scientific">Mus musculus</name>
    <name type="common">Mouse</name>
    <dbReference type="NCBI Taxonomy" id="10090"/>
    <lineage>
        <taxon>Eukaryota</taxon>
        <taxon>Metazoa</taxon>
        <taxon>Chordata</taxon>
        <taxon>Craniata</taxon>
        <taxon>Vertebrata</taxon>
        <taxon>Euteleostomi</taxon>
        <taxon>Mammalia</taxon>
        <taxon>Eutheria</taxon>
        <taxon>Euarchontoglires</taxon>
        <taxon>Glires</taxon>
        <taxon>Rodentia</taxon>
        <taxon>Myomorpha</taxon>
        <taxon>Muroidea</taxon>
        <taxon>Muridae</taxon>
        <taxon>Murinae</taxon>
        <taxon>Mus</taxon>
        <taxon>Mus</taxon>
    </lineage>
</organism>
<comment type="subcellular location">
    <subcellularLocation>
        <location evidence="4">Membrane</location>
        <topology evidence="4">Single-pass membrane protein</topology>
    </subcellularLocation>
</comment>
<comment type="alternative products">
    <event type="alternative splicing"/>
    <isoform>
        <id>Q9DA16-1</id>
        <name>1</name>
        <sequence type="displayed"/>
    </isoform>
    <isoform>
        <id>Q9DA16-2</id>
        <name>2</name>
        <sequence type="described" ref="VSP_037225"/>
    </isoform>
    <isoform>
        <id>Q9DA16-3</id>
        <name>3</name>
        <sequence type="described" ref="VSP_037224 VSP_037226"/>
    </isoform>
</comment>
<comment type="miscellaneous">
    <text>Izumo is the name of a Japanese shrine to marriage.</text>
</comment>
<comment type="similarity">
    <text evidence="4">Belongs to the Izumo family.</text>
</comment>
<comment type="sequence caution" evidence="4">
    <conflict type="erroneous initiation">
        <sequence resource="EMBL-CDS" id="BAB24492"/>
    </conflict>
    <text>Truncated N-terminus.</text>
</comment>
<evidence type="ECO:0000255" key="1"/>
<evidence type="ECO:0000303" key="2">
    <source>
    </source>
</evidence>
<evidence type="ECO:0000303" key="3">
    <source>
    </source>
</evidence>
<evidence type="ECO:0000305" key="4"/>